<comment type="function">
    <text evidence="1">The RuvA-RuvB-RuvC complex processes Holliday junction (HJ) DNA during genetic recombination and DNA repair, while the RuvA-RuvB complex plays an important role in the rescue of blocked DNA replication forks via replication fork reversal (RFR). RuvA specifically binds to HJ cruciform DNA, conferring on it an open structure. The RuvB hexamer acts as an ATP-dependent pump, pulling dsDNA into and through the RuvAB complex. RuvB forms 2 homohexamers on either side of HJ DNA bound by 1 or 2 RuvA tetramers; 4 subunits per hexamer contact DNA at a time. Coordinated motions by a converter formed by DNA-disengaged RuvB subunits stimulates ATP hydrolysis and nucleotide exchange. Immobilization of the converter enables RuvB to convert the ATP-contained energy into a lever motion, pulling 2 nucleotides of DNA out of the RuvA tetramer per ATP hydrolyzed, thus driving DNA branch migration. The RuvB motors rotate together with the DNA substrate, which together with the progressing nucleotide cycle form the mechanistic basis for DNA recombination by continuous HJ branch migration. Branch migration allows RuvC to scan DNA until it finds its consensus sequence, where it cleaves and resolves cruciform DNA.</text>
</comment>
<comment type="catalytic activity">
    <reaction evidence="1">
        <text>ATP + H2O = ADP + phosphate + H(+)</text>
        <dbReference type="Rhea" id="RHEA:13065"/>
        <dbReference type="ChEBI" id="CHEBI:15377"/>
        <dbReference type="ChEBI" id="CHEBI:15378"/>
        <dbReference type="ChEBI" id="CHEBI:30616"/>
        <dbReference type="ChEBI" id="CHEBI:43474"/>
        <dbReference type="ChEBI" id="CHEBI:456216"/>
    </reaction>
</comment>
<comment type="subunit">
    <text evidence="1">Homohexamer. Forms an RuvA(8)-RuvB(12)-Holliday junction (HJ) complex. HJ DNA is sandwiched between 2 RuvA tetramers; dsDNA enters through RuvA and exits via RuvB. An RuvB hexamer assembles on each DNA strand where it exits the tetramer. Each RuvB hexamer is contacted by two RuvA subunits (via domain III) on 2 adjacent RuvB subunits; this complex drives branch migration. In the full resolvosome a probable DNA-RuvA(4)-RuvB(12)-RuvC(2) complex forms which resolves the HJ.</text>
</comment>
<comment type="subcellular location">
    <subcellularLocation>
        <location evidence="1">Cytoplasm</location>
    </subcellularLocation>
</comment>
<comment type="domain">
    <text evidence="1">Has 3 domains, the large (RuvB-L) and small ATPase (RuvB-S) domains and the C-terminal head (RuvB-H) domain. The head domain binds DNA, while the ATPase domains jointly bind ATP, ADP or are empty depending on the state of the subunit in the translocation cycle. During a single DNA translocation step the structure of each domain remains the same, but their relative positions change.</text>
</comment>
<comment type="similarity">
    <text evidence="1">Belongs to the RuvB family.</text>
</comment>
<dbReference type="EC" id="3.6.4.-" evidence="1"/>
<dbReference type="EMBL" id="BX571857">
    <property type="protein sequence ID" value="CAG43378.1"/>
    <property type="molecule type" value="Genomic_DNA"/>
</dbReference>
<dbReference type="RefSeq" id="WP_001005768.1">
    <property type="nucleotide sequence ID" value="NC_002953.3"/>
</dbReference>
<dbReference type="SMR" id="Q6G8S8"/>
<dbReference type="KEGG" id="sas:SAS1577"/>
<dbReference type="HOGENOM" id="CLU_055599_1_0_9"/>
<dbReference type="GO" id="GO:0005737">
    <property type="term" value="C:cytoplasm"/>
    <property type="evidence" value="ECO:0007669"/>
    <property type="project" value="UniProtKB-SubCell"/>
</dbReference>
<dbReference type="GO" id="GO:0048476">
    <property type="term" value="C:Holliday junction resolvase complex"/>
    <property type="evidence" value="ECO:0007669"/>
    <property type="project" value="UniProtKB-UniRule"/>
</dbReference>
<dbReference type="GO" id="GO:0005524">
    <property type="term" value="F:ATP binding"/>
    <property type="evidence" value="ECO:0007669"/>
    <property type="project" value="UniProtKB-UniRule"/>
</dbReference>
<dbReference type="GO" id="GO:0016887">
    <property type="term" value="F:ATP hydrolysis activity"/>
    <property type="evidence" value="ECO:0007669"/>
    <property type="project" value="InterPro"/>
</dbReference>
<dbReference type="GO" id="GO:0000400">
    <property type="term" value="F:four-way junction DNA binding"/>
    <property type="evidence" value="ECO:0007669"/>
    <property type="project" value="UniProtKB-UniRule"/>
</dbReference>
<dbReference type="GO" id="GO:0009378">
    <property type="term" value="F:four-way junction helicase activity"/>
    <property type="evidence" value="ECO:0007669"/>
    <property type="project" value="InterPro"/>
</dbReference>
<dbReference type="GO" id="GO:0006310">
    <property type="term" value="P:DNA recombination"/>
    <property type="evidence" value="ECO:0007669"/>
    <property type="project" value="UniProtKB-UniRule"/>
</dbReference>
<dbReference type="GO" id="GO:0006281">
    <property type="term" value="P:DNA repair"/>
    <property type="evidence" value="ECO:0007669"/>
    <property type="project" value="UniProtKB-UniRule"/>
</dbReference>
<dbReference type="CDD" id="cd00009">
    <property type="entry name" value="AAA"/>
    <property type="match status" value="1"/>
</dbReference>
<dbReference type="Gene3D" id="1.10.8.60">
    <property type="match status" value="1"/>
</dbReference>
<dbReference type="Gene3D" id="3.40.50.300">
    <property type="entry name" value="P-loop containing nucleotide triphosphate hydrolases"/>
    <property type="match status" value="1"/>
</dbReference>
<dbReference type="Gene3D" id="1.10.10.10">
    <property type="entry name" value="Winged helix-like DNA-binding domain superfamily/Winged helix DNA-binding domain"/>
    <property type="match status" value="1"/>
</dbReference>
<dbReference type="HAMAP" id="MF_00016">
    <property type="entry name" value="DNA_HJ_migration_RuvB"/>
    <property type="match status" value="1"/>
</dbReference>
<dbReference type="InterPro" id="IPR003593">
    <property type="entry name" value="AAA+_ATPase"/>
</dbReference>
<dbReference type="InterPro" id="IPR041445">
    <property type="entry name" value="AAA_lid_4"/>
</dbReference>
<dbReference type="InterPro" id="IPR004605">
    <property type="entry name" value="DNA_helicase_Holl-junc_RuvB"/>
</dbReference>
<dbReference type="InterPro" id="IPR027417">
    <property type="entry name" value="P-loop_NTPase"/>
</dbReference>
<dbReference type="InterPro" id="IPR008824">
    <property type="entry name" value="RuvB-like_N"/>
</dbReference>
<dbReference type="InterPro" id="IPR008823">
    <property type="entry name" value="RuvB_C"/>
</dbReference>
<dbReference type="InterPro" id="IPR036388">
    <property type="entry name" value="WH-like_DNA-bd_sf"/>
</dbReference>
<dbReference type="InterPro" id="IPR036390">
    <property type="entry name" value="WH_DNA-bd_sf"/>
</dbReference>
<dbReference type="NCBIfam" id="NF000868">
    <property type="entry name" value="PRK00080.1"/>
    <property type="match status" value="1"/>
</dbReference>
<dbReference type="NCBIfam" id="TIGR00635">
    <property type="entry name" value="ruvB"/>
    <property type="match status" value="1"/>
</dbReference>
<dbReference type="PANTHER" id="PTHR42848">
    <property type="match status" value="1"/>
</dbReference>
<dbReference type="PANTHER" id="PTHR42848:SF1">
    <property type="entry name" value="HOLLIDAY JUNCTION BRANCH MIGRATION COMPLEX SUBUNIT RUVB"/>
    <property type="match status" value="1"/>
</dbReference>
<dbReference type="Pfam" id="PF17864">
    <property type="entry name" value="AAA_lid_4"/>
    <property type="match status" value="1"/>
</dbReference>
<dbReference type="Pfam" id="PF05491">
    <property type="entry name" value="RuvB_C"/>
    <property type="match status" value="1"/>
</dbReference>
<dbReference type="Pfam" id="PF05496">
    <property type="entry name" value="RuvB_N"/>
    <property type="match status" value="1"/>
</dbReference>
<dbReference type="SMART" id="SM00382">
    <property type="entry name" value="AAA"/>
    <property type="match status" value="1"/>
</dbReference>
<dbReference type="SUPFAM" id="SSF52540">
    <property type="entry name" value="P-loop containing nucleoside triphosphate hydrolases"/>
    <property type="match status" value="1"/>
</dbReference>
<dbReference type="SUPFAM" id="SSF46785">
    <property type="entry name" value="Winged helix' DNA-binding domain"/>
    <property type="match status" value="1"/>
</dbReference>
<accession>Q6G8S8</accession>
<organism>
    <name type="scientific">Staphylococcus aureus (strain MSSA476)</name>
    <dbReference type="NCBI Taxonomy" id="282459"/>
    <lineage>
        <taxon>Bacteria</taxon>
        <taxon>Bacillati</taxon>
        <taxon>Bacillota</taxon>
        <taxon>Bacilli</taxon>
        <taxon>Bacillales</taxon>
        <taxon>Staphylococcaceae</taxon>
        <taxon>Staphylococcus</taxon>
    </lineage>
</organism>
<feature type="chain" id="PRO_0000165598" description="Holliday junction branch migration complex subunit RuvB">
    <location>
        <begin position="1"/>
        <end position="334"/>
    </location>
</feature>
<feature type="region of interest" description="Large ATPase domain (RuvB-L)" evidence="1">
    <location>
        <begin position="1"/>
        <end position="182"/>
    </location>
</feature>
<feature type="region of interest" description="Small ATPAse domain (RuvB-S)" evidence="1">
    <location>
        <begin position="183"/>
        <end position="253"/>
    </location>
</feature>
<feature type="region of interest" description="Head domain (RuvB-H)" evidence="1">
    <location>
        <begin position="256"/>
        <end position="334"/>
    </location>
</feature>
<feature type="binding site" evidence="1">
    <location>
        <position position="21"/>
    </location>
    <ligand>
        <name>ATP</name>
        <dbReference type="ChEBI" id="CHEBI:30616"/>
    </ligand>
</feature>
<feature type="binding site" evidence="1">
    <location>
        <position position="22"/>
    </location>
    <ligand>
        <name>ATP</name>
        <dbReference type="ChEBI" id="CHEBI:30616"/>
    </ligand>
</feature>
<feature type="binding site" evidence="1">
    <location>
        <position position="63"/>
    </location>
    <ligand>
        <name>ATP</name>
        <dbReference type="ChEBI" id="CHEBI:30616"/>
    </ligand>
</feature>
<feature type="binding site" evidence="1">
    <location>
        <position position="66"/>
    </location>
    <ligand>
        <name>ATP</name>
        <dbReference type="ChEBI" id="CHEBI:30616"/>
    </ligand>
</feature>
<feature type="binding site" evidence="1">
    <location>
        <position position="67"/>
    </location>
    <ligand>
        <name>ATP</name>
        <dbReference type="ChEBI" id="CHEBI:30616"/>
    </ligand>
</feature>
<feature type="binding site" evidence="1">
    <location>
        <position position="67"/>
    </location>
    <ligand>
        <name>Mg(2+)</name>
        <dbReference type="ChEBI" id="CHEBI:18420"/>
    </ligand>
</feature>
<feature type="binding site" evidence="1">
    <location>
        <position position="68"/>
    </location>
    <ligand>
        <name>ATP</name>
        <dbReference type="ChEBI" id="CHEBI:30616"/>
    </ligand>
</feature>
<feature type="binding site" evidence="1">
    <location>
        <begin position="129"/>
        <end position="131"/>
    </location>
    <ligand>
        <name>ATP</name>
        <dbReference type="ChEBI" id="CHEBI:30616"/>
    </ligand>
</feature>
<feature type="binding site" evidence="1">
    <location>
        <position position="172"/>
    </location>
    <ligand>
        <name>ATP</name>
        <dbReference type="ChEBI" id="CHEBI:30616"/>
    </ligand>
</feature>
<feature type="binding site" evidence="1">
    <location>
        <position position="182"/>
    </location>
    <ligand>
        <name>ATP</name>
        <dbReference type="ChEBI" id="CHEBI:30616"/>
    </ligand>
</feature>
<feature type="binding site" evidence="1">
    <location>
        <position position="219"/>
    </location>
    <ligand>
        <name>ATP</name>
        <dbReference type="ChEBI" id="CHEBI:30616"/>
    </ligand>
</feature>
<feature type="binding site" evidence="1">
    <location>
        <position position="292"/>
    </location>
    <ligand>
        <name>DNA</name>
        <dbReference type="ChEBI" id="CHEBI:16991"/>
    </ligand>
</feature>
<feature type="binding site" evidence="1">
    <location>
        <position position="311"/>
    </location>
    <ligand>
        <name>DNA</name>
        <dbReference type="ChEBI" id="CHEBI:16991"/>
    </ligand>
</feature>
<feature type="binding site" evidence="1">
    <location>
        <position position="316"/>
    </location>
    <ligand>
        <name>DNA</name>
        <dbReference type="ChEBI" id="CHEBI:16991"/>
    </ligand>
</feature>
<evidence type="ECO:0000255" key="1">
    <source>
        <dbReference type="HAMAP-Rule" id="MF_00016"/>
    </source>
</evidence>
<keyword id="KW-0067">ATP-binding</keyword>
<keyword id="KW-0963">Cytoplasm</keyword>
<keyword id="KW-0227">DNA damage</keyword>
<keyword id="KW-0233">DNA recombination</keyword>
<keyword id="KW-0234">DNA repair</keyword>
<keyword id="KW-0238">DNA-binding</keyword>
<keyword id="KW-0378">Hydrolase</keyword>
<keyword id="KW-0547">Nucleotide-binding</keyword>
<name>RUVB_STAAS</name>
<sequence length="334" mass="37646">MNERMVDQSMHSEETDFELSLRPTRLRQYIGQNSIKSNLEVFIKAAKLRHEPLDHVLLFGPPGLGKTTLSNIIANEMEVNIRTVSGPSLERPGDLAAILSGLQPGDVLFIDEIHRLSSVVEEVLYPAMEDFFLDIIIGKGDEARSIRIDLPPFTLVGATTRAGSLTGPLRDRFGVHLRLEYYNESDLKEIIIRTAEVLGTGIDEESAIELAKRSRGTPRVANRLLKRVRDFQQVNEDEQIYIETTKHALGLLQVDQHGLDYIDHKMMNCIIKQYNGGPVGLDTIAVTIGEERITIEDVYEPFLIQKGFLERTPRGRKATPLAYEHFAKSNEERG</sequence>
<gene>
    <name evidence="1" type="primary">ruvB</name>
    <name type="ordered locus">SAS1577</name>
</gene>
<reference key="1">
    <citation type="journal article" date="2004" name="Proc. Natl. Acad. Sci. U.S.A.">
        <title>Complete genomes of two clinical Staphylococcus aureus strains: evidence for the rapid evolution of virulence and drug resistance.</title>
        <authorList>
            <person name="Holden M.T.G."/>
            <person name="Feil E.J."/>
            <person name="Lindsay J.A."/>
            <person name="Peacock S.J."/>
            <person name="Day N.P.J."/>
            <person name="Enright M.C."/>
            <person name="Foster T.J."/>
            <person name="Moore C.E."/>
            <person name="Hurst L."/>
            <person name="Atkin R."/>
            <person name="Barron A."/>
            <person name="Bason N."/>
            <person name="Bentley S.D."/>
            <person name="Chillingworth C."/>
            <person name="Chillingworth T."/>
            <person name="Churcher C."/>
            <person name="Clark L."/>
            <person name="Corton C."/>
            <person name="Cronin A."/>
            <person name="Doggett J."/>
            <person name="Dowd L."/>
            <person name="Feltwell T."/>
            <person name="Hance Z."/>
            <person name="Harris B."/>
            <person name="Hauser H."/>
            <person name="Holroyd S."/>
            <person name="Jagels K."/>
            <person name="James K.D."/>
            <person name="Lennard N."/>
            <person name="Line A."/>
            <person name="Mayes R."/>
            <person name="Moule S."/>
            <person name="Mungall K."/>
            <person name="Ormond D."/>
            <person name="Quail M.A."/>
            <person name="Rabbinowitsch E."/>
            <person name="Rutherford K.M."/>
            <person name="Sanders M."/>
            <person name="Sharp S."/>
            <person name="Simmonds M."/>
            <person name="Stevens K."/>
            <person name="Whitehead S."/>
            <person name="Barrell B.G."/>
            <person name="Spratt B.G."/>
            <person name="Parkhill J."/>
        </authorList>
    </citation>
    <scope>NUCLEOTIDE SEQUENCE [LARGE SCALE GENOMIC DNA]</scope>
    <source>
        <strain>MSSA476</strain>
    </source>
</reference>
<proteinExistence type="inferred from homology"/>
<protein>
    <recommendedName>
        <fullName evidence="1">Holliday junction branch migration complex subunit RuvB</fullName>
        <ecNumber evidence="1">3.6.4.-</ecNumber>
    </recommendedName>
</protein>